<keyword id="KW-0002">3D-structure</keyword>
<keyword id="KW-0049">Antioxidant</keyword>
<keyword id="KW-0186">Copper</keyword>
<keyword id="KW-0903">Direct protein sequencing</keyword>
<keyword id="KW-1015">Disulfide bond</keyword>
<keyword id="KW-0479">Metal-binding</keyword>
<keyword id="KW-0560">Oxidoreductase</keyword>
<keyword id="KW-0574">Periplasm</keyword>
<keyword id="KW-0732">Signal</keyword>
<keyword id="KW-0862">Zinc</keyword>
<sequence length="173" mass="18109">MNKAKTLLFTALAFGLSHQALAQDLTVKMTDLQTGKPVGTIELSQNKYGVVFTPELADLTPGMHGFHIHQNGSCASSEKDGKVVLGGAAGGHYDPEHTNKHGFPWTDDNHKGDLPALFVSANGLATNPVLAPRLTLKELKGHAIMIHAGGDNHSDMPKALGGGGARVACGVIQ</sequence>
<proteinExistence type="evidence at protein level"/>
<dbReference type="EC" id="1.15.1.1"/>
<dbReference type="EMBL" id="J02658">
    <property type="protein sequence ID" value="AAA25632.1"/>
    <property type="molecule type" value="Genomic_DNA"/>
</dbReference>
<dbReference type="PIR" id="A26689">
    <property type="entry name" value="DSFOCL"/>
</dbReference>
<dbReference type="RefSeq" id="WP_023934797.1">
    <property type="nucleotide sequence ID" value="NZ_PYOJ01000018.1"/>
</dbReference>
<dbReference type="PDB" id="1BZO">
    <property type="method" value="X-ray"/>
    <property type="resolution" value="2.10 A"/>
    <property type="chains" value="A=23-173"/>
</dbReference>
<dbReference type="PDB" id="1IB5">
    <property type="method" value="X-ray"/>
    <property type="resolution" value="2.45 A"/>
    <property type="chains" value="A=23-173"/>
</dbReference>
<dbReference type="PDB" id="1IBB">
    <property type="method" value="X-ray"/>
    <property type="resolution" value="2.10 A"/>
    <property type="chains" value="A=23-173"/>
</dbReference>
<dbReference type="PDB" id="1IBD">
    <property type="method" value="X-ray"/>
    <property type="resolution" value="2.00 A"/>
    <property type="chains" value="A=23-173"/>
</dbReference>
<dbReference type="PDB" id="1IBF">
    <property type="method" value="X-ray"/>
    <property type="resolution" value="2.20 A"/>
    <property type="chains" value="A=23-173"/>
</dbReference>
<dbReference type="PDB" id="1IBH">
    <property type="method" value="X-ray"/>
    <property type="resolution" value="2.00 A"/>
    <property type="chains" value="A=23-173"/>
</dbReference>
<dbReference type="PDB" id="1OAJ">
    <property type="method" value="X-ray"/>
    <property type="resolution" value="1.73 A"/>
    <property type="chains" value="A=23-173"/>
</dbReference>
<dbReference type="PDB" id="1OAL">
    <property type="method" value="X-ray"/>
    <property type="resolution" value="1.50 A"/>
    <property type="chains" value="A=23-173"/>
</dbReference>
<dbReference type="PDB" id="1YAI">
    <property type="method" value="X-ray"/>
    <property type="resolution" value="1.90 A"/>
    <property type="chains" value="A/B/C=23-173"/>
</dbReference>
<dbReference type="PDBsum" id="1BZO"/>
<dbReference type="PDBsum" id="1IB5"/>
<dbReference type="PDBsum" id="1IBB"/>
<dbReference type="PDBsum" id="1IBD"/>
<dbReference type="PDBsum" id="1IBF"/>
<dbReference type="PDBsum" id="1IBH"/>
<dbReference type="PDBsum" id="1OAJ"/>
<dbReference type="PDBsum" id="1OAL"/>
<dbReference type="PDBsum" id="1YAI"/>
<dbReference type="SMR" id="P00446"/>
<dbReference type="STRING" id="553611.GCA_001557755_03507"/>
<dbReference type="OrthoDB" id="5431326at2"/>
<dbReference type="EvolutionaryTrace" id="P00446"/>
<dbReference type="GO" id="GO:0042597">
    <property type="term" value="C:periplasmic space"/>
    <property type="evidence" value="ECO:0007669"/>
    <property type="project" value="UniProtKB-SubCell"/>
</dbReference>
<dbReference type="GO" id="GO:0005507">
    <property type="term" value="F:copper ion binding"/>
    <property type="evidence" value="ECO:0007669"/>
    <property type="project" value="InterPro"/>
</dbReference>
<dbReference type="GO" id="GO:0004784">
    <property type="term" value="F:superoxide dismutase activity"/>
    <property type="evidence" value="ECO:0007669"/>
    <property type="project" value="UniProtKB-EC"/>
</dbReference>
<dbReference type="CDD" id="cd00305">
    <property type="entry name" value="Cu-Zn_Superoxide_Dismutase"/>
    <property type="match status" value="1"/>
</dbReference>
<dbReference type="Gene3D" id="2.60.40.200">
    <property type="entry name" value="Superoxide dismutase, copper/zinc binding domain"/>
    <property type="match status" value="1"/>
</dbReference>
<dbReference type="InterPro" id="IPR036423">
    <property type="entry name" value="SOD-like_Cu/Zn_dom_sf"/>
</dbReference>
<dbReference type="InterPro" id="IPR024134">
    <property type="entry name" value="SOD_Cu/Zn_/chaperone"/>
</dbReference>
<dbReference type="InterPro" id="IPR018152">
    <property type="entry name" value="SOD_Cu/Zn_BS"/>
</dbReference>
<dbReference type="InterPro" id="IPR001424">
    <property type="entry name" value="SOD_Cu_Zn_dom"/>
</dbReference>
<dbReference type="NCBIfam" id="NF007628">
    <property type="entry name" value="PRK10290.1"/>
    <property type="match status" value="1"/>
</dbReference>
<dbReference type="PANTHER" id="PTHR10003">
    <property type="entry name" value="SUPEROXIDE DISMUTASE CU-ZN -RELATED"/>
    <property type="match status" value="1"/>
</dbReference>
<dbReference type="Pfam" id="PF00080">
    <property type="entry name" value="Sod_Cu"/>
    <property type="match status" value="1"/>
</dbReference>
<dbReference type="SUPFAM" id="SSF49329">
    <property type="entry name" value="Cu,Zn superoxide dismutase-like"/>
    <property type="match status" value="1"/>
</dbReference>
<dbReference type="PROSITE" id="PS00087">
    <property type="entry name" value="SOD_CU_ZN_1"/>
    <property type="match status" value="1"/>
</dbReference>
<dbReference type="PROSITE" id="PS00332">
    <property type="entry name" value="SOD_CU_ZN_2"/>
    <property type="match status" value="1"/>
</dbReference>
<name>SODC_PHOLE</name>
<organism>
    <name type="scientific">Photobacterium leiognathi</name>
    <dbReference type="NCBI Taxonomy" id="553611"/>
    <lineage>
        <taxon>Bacteria</taxon>
        <taxon>Pseudomonadati</taxon>
        <taxon>Pseudomonadota</taxon>
        <taxon>Gammaproteobacteria</taxon>
        <taxon>Vibrionales</taxon>
        <taxon>Vibrionaceae</taxon>
        <taxon>Photobacterium</taxon>
    </lineage>
</organism>
<comment type="function">
    <text>Destroys radicals which are normally produced within the cells and which are toxic to biological systems.</text>
</comment>
<comment type="catalytic activity">
    <reaction>
        <text>2 superoxide + 2 H(+) = H2O2 + O2</text>
        <dbReference type="Rhea" id="RHEA:20696"/>
        <dbReference type="ChEBI" id="CHEBI:15378"/>
        <dbReference type="ChEBI" id="CHEBI:15379"/>
        <dbReference type="ChEBI" id="CHEBI:16240"/>
        <dbReference type="ChEBI" id="CHEBI:18421"/>
        <dbReference type="EC" id="1.15.1.1"/>
    </reaction>
</comment>
<comment type="cofactor">
    <cofactor>
        <name>Cu cation</name>
        <dbReference type="ChEBI" id="CHEBI:23378"/>
    </cofactor>
    <text>Binds 1 copper ion per subunit.</text>
</comment>
<comment type="cofactor">
    <cofactor>
        <name>Zn(2+)</name>
        <dbReference type="ChEBI" id="CHEBI:29105"/>
    </cofactor>
    <text>Binds 1 zinc ion per subunit.</text>
</comment>
<comment type="subunit">
    <text>Homodimer.</text>
</comment>
<comment type="subcellular location">
    <subcellularLocation>
        <location>Periplasm</location>
    </subcellularLocation>
</comment>
<comment type="similarity">
    <text evidence="2">Belongs to the Cu-Zn superoxide dismutase family.</text>
</comment>
<evidence type="ECO:0000269" key="1">
    <source>
    </source>
</evidence>
<evidence type="ECO:0000305" key="2"/>
<evidence type="ECO:0007829" key="3">
    <source>
        <dbReference type="PDB" id="1OAL"/>
    </source>
</evidence>
<accession>P00446</accession>
<reference key="1">
    <citation type="journal article" date="1987" name="J. Biol. Chem.">
        <title>Bacteriocuprein superoxide dismutase of Photobacterium leiognathi. Isolation and sequence of the gene and evidence for a precursor form.</title>
        <authorList>
            <person name="Steinman H.M."/>
        </authorList>
    </citation>
    <scope>NUCLEOTIDE SEQUENCE [GENOMIC DNA]</scope>
</reference>
<reference key="2">
    <citation type="journal article" date="1983" name="Hoppe-Seyler's Z. Physiol. Chem.">
        <title>The primary structure of Cu-Zn superoxide dismutase from Photobacterium leiognathi: evidence for a separate evolution of Cu-Zn superoxide dismutase in bacteria.</title>
        <authorList>
            <person name="Steffens G.J."/>
            <person name="Bannister J.V."/>
            <person name="Bannister W.H."/>
            <person name="Flohe L."/>
            <person name="Gunzler W.A."/>
            <person name="Kim S.-M.A."/>
            <person name="Otting F."/>
        </authorList>
    </citation>
    <scope>PROTEIN SEQUENCE OF 23-173</scope>
</reference>
<reference key="3">
    <citation type="journal article" date="1985" name="Proc. Natl. Acad. Sci. U.S.A.">
        <title>The presence of a copper/zinc superoxide dismutase in the bacterium Photobacterium leiognathi: a likely case of gene transfer from eukaryotes to prokaryotes.</title>
        <authorList>
            <person name="Bannister J.V."/>
            <person name="Parker M.W."/>
        </authorList>
    </citation>
    <scope>DISCUSSION OF POSSIBLE GENE TRANSFER FROM EUKARYOTES</scope>
</reference>
<reference key="4">
    <citation type="journal article" date="1986" name="J. Mol. Evol.">
        <title>Copper/zinc superoxide dismutase: how likely is gene transfer from ponyfish to Photobacterium leiognathi.</title>
        <authorList>
            <person name="Leunissen J.A.M."/>
            <person name="de Jong W.W."/>
        </authorList>
    </citation>
    <scope>DISCUSSION OF POSSIBLE GENE TRANSFER FROM EUKARYOTES</scope>
</reference>
<reference key="5">
    <citation type="journal article" date="1996" name="Proc. Natl. Acad. Sci. U.S.A.">
        <title>Novel dimeric interface and electrostatic recognition in bacterial Cu,Zn superoxide dismutase.</title>
        <authorList>
            <person name="Bourne Y."/>
            <person name="Redford S.M."/>
            <person name="Steinman H.M."/>
            <person name="Lepock J.R."/>
            <person name="Tainer J.A."/>
            <person name="Getzoff E.D."/>
        </authorList>
    </citation>
    <scope>X-RAY CRYSTALLOGRAPHY (1.9 ANGSTROMS)</scope>
</reference>
<reference key="6">
    <citation type="journal article" date="1999" name="J. Mol. Biol.">
        <title>Evolutionary constraints for dimer formation in prokaryotic Cu,Zn superoxide dismutase.</title>
        <authorList>
            <person name="Bordo D."/>
            <person name="Matak D."/>
            <person name="Djinovic-Carugo K."/>
            <person name="Rosano C."/>
            <person name="Pesce A."/>
            <person name="Bolognesi M."/>
            <person name="Stroppolo M.E."/>
            <person name="Falconi M."/>
            <person name="Battistoni A."/>
            <person name="Desideri A."/>
        </authorList>
    </citation>
    <scope>X-RAY CRYSTALLOGRAPHY (2.1 ANGSTROMS)</scope>
</reference>
<feature type="signal peptide" evidence="1">
    <location>
        <begin position="1"/>
        <end position="22"/>
    </location>
</feature>
<feature type="chain" id="PRO_0000032836" description="Superoxide dismutase [Cu-Zn]">
    <location>
        <begin position="23"/>
        <end position="173"/>
    </location>
</feature>
<feature type="binding site">
    <location>
        <position position="67"/>
    </location>
    <ligand>
        <name>Cu cation</name>
        <dbReference type="ChEBI" id="CHEBI:23378"/>
        <note>catalytic</note>
    </ligand>
</feature>
<feature type="binding site">
    <location>
        <position position="69"/>
    </location>
    <ligand>
        <name>Cu cation</name>
        <dbReference type="ChEBI" id="CHEBI:23378"/>
        <note>catalytic</note>
    </ligand>
</feature>
<feature type="binding site">
    <location>
        <position position="92"/>
    </location>
    <ligand>
        <name>Cu cation</name>
        <dbReference type="ChEBI" id="CHEBI:23378"/>
        <note>catalytic</note>
    </ligand>
</feature>
<feature type="binding site">
    <location>
        <position position="92"/>
    </location>
    <ligand>
        <name>Zn(2+)</name>
        <dbReference type="ChEBI" id="CHEBI:29105"/>
        <note>structural</note>
    </ligand>
</feature>
<feature type="binding site">
    <location>
        <position position="101"/>
    </location>
    <ligand>
        <name>Zn(2+)</name>
        <dbReference type="ChEBI" id="CHEBI:29105"/>
        <note>structural</note>
    </ligand>
</feature>
<feature type="binding site">
    <location>
        <position position="110"/>
    </location>
    <ligand>
        <name>Zn(2+)</name>
        <dbReference type="ChEBI" id="CHEBI:29105"/>
        <note>structural</note>
    </ligand>
</feature>
<feature type="binding site">
    <location>
        <position position="113"/>
    </location>
    <ligand>
        <name>Zn(2+)</name>
        <dbReference type="ChEBI" id="CHEBI:29105"/>
        <note>structural</note>
    </ligand>
</feature>
<feature type="binding site">
    <location>
        <position position="147"/>
    </location>
    <ligand>
        <name>Cu cation</name>
        <dbReference type="ChEBI" id="CHEBI:23378"/>
        <note>catalytic</note>
    </ligand>
</feature>
<feature type="disulfide bond">
    <location>
        <begin position="74"/>
        <end position="169"/>
    </location>
</feature>
<feature type="strand" evidence="3">
    <location>
        <begin position="24"/>
        <end position="31"/>
    </location>
</feature>
<feature type="turn" evidence="3">
    <location>
        <begin position="32"/>
        <end position="34"/>
    </location>
</feature>
<feature type="strand" evidence="3">
    <location>
        <begin position="37"/>
        <end position="46"/>
    </location>
</feature>
<feature type="strand" evidence="3">
    <location>
        <begin position="49"/>
        <end position="56"/>
    </location>
</feature>
<feature type="strand" evidence="3">
    <location>
        <begin position="61"/>
        <end position="64"/>
    </location>
</feature>
<feature type="strand" evidence="3">
    <location>
        <begin position="66"/>
        <end position="72"/>
    </location>
</feature>
<feature type="strand" evidence="3">
    <location>
        <begin position="77"/>
        <end position="79"/>
    </location>
</feature>
<feature type="strand" evidence="3">
    <location>
        <begin position="82"/>
        <end position="84"/>
    </location>
</feature>
<feature type="helix" evidence="3">
    <location>
        <begin position="87"/>
        <end position="89"/>
    </location>
</feature>
<feature type="strand" evidence="3">
    <location>
        <begin position="107"/>
        <end position="109"/>
    </location>
</feature>
<feature type="strand" evidence="3">
    <location>
        <begin position="117"/>
        <end position="119"/>
    </location>
</feature>
<feature type="strand" evidence="3">
    <location>
        <begin position="129"/>
        <end position="131"/>
    </location>
</feature>
<feature type="helix" evidence="3">
    <location>
        <begin position="136"/>
        <end position="139"/>
    </location>
</feature>
<feature type="strand" evidence="3">
    <location>
        <begin position="143"/>
        <end position="149"/>
    </location>
</feature>
<feature type="strand" evidence="3">
    <location>
        <begin position="153"/>
        <end position="158"/>
    </location>
</feature>
<feature type="helix" evidence="3">
    <location>
        <begin position="159"/>
        <end position="162"/>
    </location>
</feature>
<feature type="strand" evidence="3">
    <location>
        <begin position="165"/>
        <end position="171"/>
    </location>
</feature>
<protein>
    <recommendedName>
        <fullName>Superoxide dismutase [Cu-Zn]</fullName>
        <ecNumber>1.15.1.1</ecNumber>
    </recommendedName>
</protein>
<gene>
    <name type="primary">sodC</name>
</gene>